<name>CYB_ARTLI</name>
<comment type="function">
    <text evidence="2">Component of the ubiquinol-cytochrome c reductase complex (complex III or cytochrome b-c1 complex) that is part of the mitochondrial respiratory chain. The b-c1 complex mediates electron transfer from ubiquinol to cytochrome c. Contributes to the generation of a proton gradient across the mitochondrial membrane that is then used for ATP synthesis.</text>
</comment>
<comment type="cofactor">
    <cofactor evidence="2">
        <name>heme b</name>
        <dbReference type="ChEBI" id="CHEBI:60344"/>
    </cofactor>
    <text evidence="2">Binds 2 heme b groups non-covalently.</text>
</comment>
<comment type="subunit">
    <text evidence="2">The cytochrome bc1 complex contains 11 subunits: 3 respiratory subunits (MT-CYB, CYC1 and UQCRFS1), 2 core proteins (UQCRC1 and UQCRC2) and 6 low-molecular weight proteins (UQCRH/QCR6, UQCRB/QCR7, UQCRQ/QCR8, UQCR10/QCR9, UQCR11/QCR10 and a cleavage product of UQCRFS1). This cytochrome bc1 complex then forms a dimer.</text>
</comment>
<comment type="subcellular location">
    <subcellularLocation>
        <location evidence="2">Mitochondrion inner membrane</location>
        <topology evidence="2">Multi-pass membrane protein</topology>
    </subcellularLocation>
</comment>
<comment type="miscellaneous">
    <text evidence="1">Heme 1 (or BL or b562) is low-potential and absorbs at about 562 nm, and heme 2 (or BH or b566) is high-potential and absorbs at about 566 nm.</text>
</comment>
<comment type="similarity">
    <text evidence="3 4">Belongs to the cytochrome b family.</text>
</comment>
<comment type="caution">
    <text evidence="2">The full-length protein contains only eight transmembrane helices, not nine as predicted by bioinformatics tools.</text>
</comment>
<protein>
    <recommendedName>
        <fullName>Cytochrome b</fullName>
    </recommendedName>
    <alternativeName>
        <fullName>Complex III subunit 3</fullName>
    </alternativeName>
    <alternativeName>
        <fullName>Complex III subunit III</fullName>
    </alternativeName>
    <alternativeName>
        <fullName>Cytochrome b-c1 complex subunit 3</fullName>
    </alternativeName>
    <alternativeName>
        <fullName>Ubiquinol-cytochrome-c reductase complex cytochrome b subunit</fullName>
    </alternativeName>
</protein>
<gene>
    <name type="primary">MT-CYB</name>
    <name type="synonym">COB</name>
    <name type="synonym">CYTB</name>
    <name type="synonym">MTCYB</name>
</gene>
<evidence type="ECO:0000250" key="1"/>
<evidence type="ECO:0000250" key="2">
    <source>
        <dbReference type="UniProtKB" id="P00157"/>
    </source>
</evidence>
<evidence type="ECO:0000255" key="3">
    <source>
        <dbReference type="PROSITE-ProRule" id="PRU00967"/>
    </source>
</evidence>
<evidence type="ECO:0000255" key="4">
    <source>
        <dbReference type="PROSITE-ProRule" id="PRU00968"/>
    </source>
</evidence>
<evidence type="ECO:0000305" key="5"/>
<geneLocation type="mitochondrion"/>
<feature type="chain" id="PRO_0000060637" description="Cytochrome b">
    <location>
        <begin position="1"/>
        <end position="379"/>
    </location>
</feature>
<feature type="transmembrane region" description="Helical" evidence="2">
    <location>
        <begin position="33"/>
        <end position="53"/>
    </location>
</feature>
<feature type="transmembrane region" description="Helical" evidence="2">
    <location>
        <begin position="77"/>
        <end position="98"/>
    </location>
</feature>
<feature type="transmembrane region" description="Helical" evidence="2">
    <location>
        <begin position="113"/>
        <end position="133"/>
    </location>
</feature>
<feature type="transmembrane region" description="Helical" evidence="2">
    <location>
        <begin position="178"/>
        <end position="198"/>
    </location>
</feature>
<feature type="transmembrane region" description="Helical" evidence="2">
    <location>
        <begin position="226"/>
        <end position="246"/>
    </location>
</feature>
<feature type="transmembrane region" description="Helical" evidence="2">
    <location>
        <begin position="288"/>
        <end position="308"/>
    </location>
</feature>
<feature type="transmembrane region" description="Helical" evidence="2">
    <location>
        <begin position="320"/>
        <end position="340"/>
    </location>
</feature>
<feature type="transmembrane region" description="Helical" evidence="2">
    <location>
        <begin position="347"/>
        <end position="367"/>
    </location>
</feature>
<feature type="binding site" description="axial binding residue" evidence="2">
    <location>
        <position position="83"/>
    </location>
    <ligand>
        <name>heme b</name>
        <dbReference type="ChEBI" id="CHEBI:60344"/>
        <label>b562</label>
    </ligand>
    <ligandPart>
        <name>Fe</name>
        <dbReference type="ChEBI" id="CHEBI:18248"/>
    </ligandPart>
</feature>
<feature type="binding site" description="axial binding residue" evidence="2">
    <location>
        <position position="97"/>
    </location>
    <ligand>
        <name>heme b</name>
        <dbReference type="ChEBI" id="CHEBI:60344"/>
        <label>b566</label>
    </ligand>
    <ligandPart>
        <name>Fe</name>
        <dbReference type="ChEBI" id="CHEBI:18248"/>
    </ligandPart>
</feature>
<feature type="binding site" description="axial binding residue" evidence="2">
    <location>
        <position position="182"/>
    </location>
    <ligand>
        <name>heme b</name>
        <dbReference type="ChEBI" id="CHEBI:60344"/>
        <label>b562</label>
    </ligand>
    <ligandPart>
        <name>Fe</name>
        <dbReference type="ChEBI" id="CHEBI:18248"/>
    </ligandPart>
</feature>
<feature type="binding site" description="axial binding residue" evidence="2">
    <location>
        <position position="196"/>
    </location>
    <ligand>
        <name>heme b</name>
        <dbReference type="ChEBI" id="CHEBI:60344"/>
        <label>b566</label>
    </ligand>
    <ligandPart>
        <name>Fe</name>
        <dbReference type="ChEBI" id="CHEBI:18248"/>
    </ligandPart>
</feature>
<feature type="binding site" evidence="2">
    <location>
        <position position="201"/>
    </location>
    <ligand>
        <name>a ubiquinone</name>
        <dbReference type="ChEBI" id="CHEBI:16389"/>
    </ligand>
</feature>
<feature type="sequence conflict" description="In Ref. 3; AAA72123." evidence="5" ref="3">
    <original>T</original>
    <variation>I</variation>
    <location>
        <position position="146"/>
    </location>
</feature>
<feature type="sequence conflict" description="In Ref. 3; AAA72123." evidence="5" ref="3">
    <original>DLD</original>
    <variation>ELV</variation>
    <location>
        <begin position="159"/>
        <end position="161"/>
    </location>
</feature>
<feature type="sequence conflict" description="In Ref. 3; AAA72123." evidence="5" ref="3">
    <original>S</original>
    <variation>F</variation>
    <location>
        <position position="169"/>
    </location>
</feature>
<proteinExistence type="inferred from homology"/>
<keyword id="KW-0249">Electron transport</keyword>
<keyword id="KW-0349">Heme</keyword>
<keyword id="KW-0408">Iron</keyword>
<keyword id="KW-0472">Membrane</keyword>
<keyword id="KW-0479">Metal-binding</keyword>
<keyword id="KW-0496">Mitochondrion</keyword>
<keyword id="KW-0999">Mitochondrion inner membrane</keyword>
<keyword id="KW-0679">Respiratory chain</keyword>
<keyword id="KW-0812">Transmembrane</keyword>
<keyword id="KW-1133">Transmembrane helix</keyword>
<keyword id="KW-0813">Transport</keyword>
<keyword id="KW-0830">Ubiquinone</keyword>
<accession>Q95739</accession>
<accession>Q31648</accession>
<accession>Q33738</accession>
<sequence length="379" mass="42715">MTNIRKTHPLLKIINSSFVDLPAPSSLSSWWNFGSLLGVCLGVQILTGLFLAMHYTSDTATAFNSVTHICRDVNYGWLLRYLHANGASMFFICLYLHVGRGLYYGSYTYSETWNIGILLLFAVMATAFMGYVLPWGQMSFWGATVTTNLLSAIPYIGTDLDQWIWGGFSVDKATLTRFFAFHFHLPFIVTALVMVHLLFLHETGSNNPTGIPSDPDMIHSHPYYTIKDILGFLVMLTALATLVLFSPDLLGDPDNYIPANPLITPPHIKPEWYFLFAYAILRSIPNKLGGVLALVMSILILAIVPILHMSKQRSMMFRPLSQCLFWLLVAVLFTLTWIGGQPVEHPYIIIGQTASVLYFLIILFLMPTISLLENYLLKW</sequence>
<organism>
    <name type="scientific">Artibeus lituratus</name>
    <name type="common">Great fruit-eating bat</name>
    <dbReference type="NCBI Taxonomy" id="27634"/>
    <lineage>
        <taxon>Eukaryota</taxon>
        <taxon>Metazoa</taxon>
        <taxon>Chordata</taxon>
        <taxon>Craniata</taxon>
        <taxon>Vertebrata</taxon>
        <taxon>Euteleostomi</taxon>
        <taxon>Mammalia</taxon>
        <taxon>Eutheria</taxon>
        <taxon>Laurasiatheria</taxon>
        <taxon>Chiroptera</taxon>
        <taxon>Yangochiroptera</taxon>
        <taxon>Phyllostomidae</taxon>
        <taxon>Stenodermatinae</taxon>
        <taxon>Artibeus</taxon>
    </lineage>
</organism>
<reference key="1">
    <citation type="submission" date="1996-08" db="EMBL/GenBank/DDBJ databases">
        <title>Phylogenetic accuracy, stability, and congruence: relationships within and among the New World bat genera Artibeus, Dermanura, and Koopmania.</title>
        <authorList>
            <person name="den Bussche R.A."/>
            <person name="Hudgeons J.L."/>
            <person name="Baker R.J."/>
        </authorList>
    </citation>
    <scope>NUCLEOTIDE SEQUENCE [GENOMIC DNA]</scope>
    <source>
        <strain>Isolate TK 25029</strain>
    </source>
</reference>
<reference key="2">
    <citation type="journal article" date="1993" name="Mol. Biol. Evol.">
        <title>Molecular phylogenetics of Stenodermatini bat genera: congruence of data from nuclear and mitochondrial DNA.</title>
        <authorList>
            <person name="den Bussche R.A."/>
            <person name="Baker R.J."/>
            <person name="Wichman H.A."/>
            <person name="Hamilton M.J."/>
        </authorList>
    </citation>
    <scope>NUCLEOTIDE SEQUENCE [GENOMIC DNA] OF 1-134</scope>
    <source>
        <strain>Isolate TK 25029</strain>
        <tissue>Muscle</tissue>
    </source>
</reference>
<reference key="3">
    <citation type="journal article" date="1994" name="J. Mammal.">
        <title>Familial affinity of Tomopeas ravus (Chiroptera) based on protein electrophoretic and cytochrome b sequence data.</title>
        <authorList>
            <person name="Sudman P.D."/>
            <person name="Barkley L.J."/>
            <person name="Hafner M.S."/>
        </authorList>
    </citation>
    <scope>NUCLEOTIDE SEQUENCE [GENOMIC DNA] OF 1-176</scope>
    <source>
        <strain>Isolate LSUMZ 25467</strain>
        <tissue>Kidney</tissue>
        <tissue>Liver</tissue>
    </source>
</reference>
<dbReference type="EMBL" id="U66505">
    <property type="protein sequence ID" value="AAB06780.1"/>
    <property type="molecule type" value="Genomic_DNA"/>
</dbReference>
<dbReference type="EMBL" id="L19520">
    <property type="protein sequence ID" value="AAA31612.1"/>
    <property type="molecule type" value="Genomic_DNA"/>
</dbReference>
<dbReference type="EMBL" id="L19718">
    <property type="protein sequence ID" value="AAA72123.1"/>
    <property type="molecule type" value="Genomic_DNA"/>
</dbReference>
<dbReference type="SMR" id="Q95739"/>
<dbReference type="GO" id="GO:0005743">
    <property type="term" value="C:mitochondrial inner membrane"/>
    <property type="evidence" value="ECO:0007669"/>
    <property type="project" value="UniProtKB-SubCell"/>
</dbReference>
<dbReference type="GO" id="GO:0045275">
    <property type="term" value="C:respiratory chain complex III"/>
    <property type="evidence" value="ECO:0007669"/>
    <property type="project" value="InterPro"/>
</dbReference>
<dbReference type="GO" id="GO:0046872">
    <property type="term" value="F:metal ion binding"/>
    <property type="evidence" value="ECO:0007669"/>
    <property type="project" value="UniProtKB-KW"/>
</dbReference>
<dbReference type="GO" id="GO:0008121">
    <property type="term" value="F:ubiquinol-cytochrome-c reductase activity"/>
    <property type="evidence" value="ECO:0007669"/>
    <property type="project" value="InterPro"/>
</dbReference>
<dbReference type="GO" id="GO:0006122">
    <property type="term" value="P:mitochondrial electron transport, ubiquinol to cytochrome c"/>
    <property type="evidence" value="ECO:0007669"/>
    <property type="project" value="TreeGrafter"/>
</dbReference>
<dbReference type="CDD" id="cd00290">
    <property type="entry name" value="cytochrome_b_C"/>
    <property type="match status" value="1"/>
</dbReference>
<dbReference type="CDD" id="cd00284">
    <property type="entry name" value="Cytochrome_b_N"/>
    <property type="match status" value="1"/>
</dbReference>
<dbReference type="FunFam" id="1.20.810.10:FF:000002">
    <property type="entry name" value="Cytochrome b"/>
    <property type="match status" value="1"/>
</dbReference>
<dbReference type="Gene3D" id="1.20.810.10">
    <property type="entry name" value="Cytochrome Bc1 Complex, Chain C"/>
    <property type="match status" value="1"/>
</dbReference>
<dbReference type="InterPro" id="IPR005798">
    <property type="entry name" value="Cyt_b/b6_C"/>
</dbReference>
<dbReference type="InterPro" id="IPR036150">
    <property type="entry name" value="Cyt_b/b6_C_sf"/>
</dbReference>
<dbReference type="InterPro" id="IPR005797">
    <property type="entry name" value="Cyt_b/b6_N"/>
</dbReference>
<dbReference type="InterPro" id="IPR027387">
    <property type="entry name" value="Cytb/b6-like_sf"/>
</dbReference>
<dbReference type="InterPro" id="IPR030689">
    <property type="entry name" value="Cytochrome_b"/>
</dbReference>
<dbReference type="InterPro" id="IPR048260">
    <property type="entry name" value="Cytochrome_b_C_euk/bac"/>
</dbReference>
<dbReference type="InterPro" id="IPR048259">
    <property type="entry name" value="Cytochrome_b_N_euk/bac"/>
</dbReference>
<dbReference type="InterPro" id="IPR016174">
    <property type="entry name" value="Di-haem_cyt_TM"/>
</dbReference>
<dbReference type="PANTHER" id="PTHR19271">
    <property type="entry name" value="CYTOCHROME B"/>
    <property type="match status" value="1"/>
</dbReference>
<dbReference type="PANTHER" id="PTHR19271:SF16">
    <property type="entry name" value="CYTOCHROME B"/>
    <property type="match status" value="1"/>
</dbReference>
<dbReference type="Pfam" id="PF00032">
    <property type="entry name" value="Cytochrom_B_C"/>
    <property type="match status" value="1"/>
</dbReference>
<dbReference type="Pfam" id="PF00033">
    <property type="entry name" value="Cytochrome_B"/>
    <property type="match status" value="1"/>
</dbReference>
<dbReference type="PIRSF" id="PIRSF038885">
    <property type="entry name" value="COB"/>
    <property type="match status" value="1"/>
</dbReference>
<dbReference type="SUPFAM" id="SSF81648">
    <property type="entry name" value="a domain/subunit of cytochrome bc1 complex (Ubiquinol-cytochrome c reductase)"/>
    <property type="match status" value="1"/>
</dbReference>
<dbReference type="SUPFAM" id="SSF81342">
    <property type="entry name" value="Transmembrane di-heme cytochromes"/>
    <property type="match status" value="1"/>
</dbReference>
<dbReference type="PROSITE" id="PS51003">
    <property type="entry name" value="CYTB_CTER"/>
    <property type="match status" value="1"/>
</dbReference>
<dbReference type="PROSITE" id="PS51002">
    <property type="entry name" value="CYTB_NTER"/>
    <property type="match status" value="1"/>
</dbReference>